<comment type="function">
    <text evidence="1">Involved in DNA repair and RecF pathway recombination.</text>
</comment>
<comment type="similarity">
    <text evidence="2">Belongs to the RecO family.</text>
</comment>
<comment type="sequence caution" evidence="2">
    <conflict type="frameshift">
        <sequence resource="EMBL-CDS" id="AAD40231"/>
    </conflict>
</comment>
<reference key="1">
    <citation type="journal article" date="1999" name="J. Bacteriol.">
        <title>Cloning and analysis of the rnc-era-recO operon from Pseudomonas aeruginosa.</title>
        <authorList>
            <person name="Powell B.S."/>
            <person name="Peters H.K. III"/>
            <person name="Nakamura Y."/>
            <person name="Court D.L."/>
        </authorList>
    </citation>
    <scope>NUCLEOTIDE SEQUENCE [GENOMIC DNA]</scope>
    <source>
        <strain>PAK</strain>
    </source>
</reference>
<reference key="2">
    <citation type="journal article" date="2000" name="Nature">
        <title>Complete genome sequence of Pseudomonas aeruginosa PAO1, an opportunistic pathogen.</title>
        <authorList>
            <person name="Stover C.K."/>
            <person name="Pham X.-Q.T."/>
            <person name="Erwin A.L."/>
            <person name="Mizoguchi S.D."/>
            <person name="Warrener P."/>
            <person name="Hickey M.J."/>
            <person name="Brinkman F.S.L."/>
            <person name="Hufnagle W.O."/>
            <person name="Kowalik D.J."/>
            <person name="Lagrou M."/>
            <person name="Garber R.L."/>
            <person name="Goltry L."/>
            <person name="Tolentino E."/>
            <person name="Westbrock-Wadman S."/>
            <person name="Yuan Y."/>
            <person name="Brody L.L."/>
            <person name="Coulter S.N."/>
            <person name="Folger K.R."/>
            <person name="Kas A."/>
            <person name="Larbig K."/>
            <person name="Lim R.M."/>
            <person name="Smith K.A."/>
            <person name="Spencer D.H."/>
            <person name="Wong G.K.-S."/>
            <person name="Wu Z."/>
            <person name="Paulsen I.T."/>
            <person name="Reizer J."/>
            <person name="Saier M.H. Jr."/>
            <person name="Hancock R.E.W."/>
            <person name="Lory S."/>
            <person name="Olson M.V."/>
        </authorList>
    </citation>
    <scope>NUCLEOTIDE SEQUENCE [LARGE SCALE GENOMIC DNA]</scope>
    <source>
        <strain>ATCC 15692 / DSM 22644 / CIP 104116 / JCM 14847 / LMG 12228 / 1C / PRS 101 / PAO1</strain>
    </source>
</reference>
<evidence type="ECO:0000250" key="1"/>
<evidence type="ECO:0000305" key="2"/>
<accession>Q9XCX7</accession>
<feature type="chain" id="PRO_0000204982" description="DNA repair protein RecO">
    <location>
        <begin position="1"/>
        <end position="233"/>
    </location>
</feature>
<name>RECO_PSEAE</name>
<proteinExistence type="inferred from homology"/>
<keyword id="KW-0227">DNA damage</keyword>
<keyword id="KW-0233">DNA recombination</keyword>
<keyword id="KW-0234">DNA repair</keyword>
<keyword id="KW-1185">Reference proteome</keyword>
<gene>
    <name type="primary">recO</name>
    <name type="ordered locus">PA0772</name>
</gene>
<protein>
    <recommendedName>
        <fullName>DNA repair protein RecO</fullName>
    </recommendedName>
    <alternativeName>
        <fullName>Recombination protein O</fullName>
    </alternativeName>
</protein>
<sequence length="233" mass="25499">MSFAAAQATYVLHSRPYKETSALVDFFTPLGRLRAVLRGARGKAGALARPFVPLEAEWRGRGELKTVARLESAGVPNLLNGQALFSGLYLNELLIRLLPAEDPQPEIFAHYAATLPLLAAGRPIEPLLRAFEWRLLEQLGYGFALDVDIDGRPIEPQALYQLLPEAGLEPVAQLQPGLFQGSELLSMADADWSAPGALAAAKRLMRQALAPHLGGRPLVSRELFMNRKESPRD</sequence>
<dbReference type="EMBL" id="AF123492">
    <property type="protein sequence ID" value="AAD40231.1"/>
    <property type="status" value="ALT_FRAME"/>
    <property type="molecule type" value="Genomic_DNA"/>
</dbReference>
<dbReference type="EMBL" id="AE004091">
    <property type="protein sequence ID" value="AAG04161.1"/>
    <property type="molecule type" value="Genomic_DNA"/>
</dbReference>
<dbReference type="PIR" id="G83548">
    <property type="entry name" value="G83548"/>
</dbReference>
<dbReference type="RefSeq" id="NP_249463.1">
    <property type="nucleotide sequence ID" value="NC_002516.2"/>
</dbReference>
<dbReference type="RefSeq" id="WP_003101972.1">
    <property type="nucleotide sequence ID" value="NZ_QZGE01000007.1"/>
</dbReference>
<dbReference type="SMR" id="Q9XCX7"/>
<dbReference type="FunCoup" id="Q9XCX7">
    <property type="interactions" value="72"/>
</dbReference>
<dbReference type="STRING" id="208964.PA0772"/>
<dbReference type="PaxDb" id="208964-PA0772"/>
<dbReference type="GeneID" id="878213"/>
<dbReference type="KEGG" id="pae:PA0772"/>
<dbReference type="PATRIC" id="fig|208964.12.peg.802"/>
<dbReference type="PseudoCAP" id="PA0772"/>
<dbReference type="HOGENOM" id="CLU_066645_1_0_6"/>
<dbReference type="InParanoid" id="Q9XCX7"/>
<dbReference type="OrthoDB" id="9804792at2"/>
<dbReference type="PhylomeDB" id="Q9XCX7"/>
<dbReference type="BioCyc" id="PAER208964:G1FZ6-785-MONOMER"/>
<dbReference type="Proteomes" id="UP000002438">
    <property type="component" value="Chromosome"/>
</dbReference>
<dbReference type="GO" id="GO:0043590">
    <property type="term" value="C:bacterial nucleoid"/>
    <property type="evidence" value="ECO:0000318"/>
    <property type="project" value="GO_Central"/>
</dbReference>
<dbReference type="GO" id="GO:0006310">
    <property type="term" value="P:DNA recombination"/>
    <property type="evidence" value="ECO:0007669"/>
    <property type="project" value="UniProtKB-UniRule"/>
</dbReference>
<dbReference type="GO" id="GO:0006302">
    <property type="term" value="P:double-strand break repair"/>
    <property type="evidence" value="ECO:0000318"/>
    <property type="project" value="GO_Central"/>
</dbReference>
<dbReference type="Gene3D" id="2.40.50.140">
    <property type="entry name" value="Nucleic acid-binding proteins"/>
    <property type="match status" value="1"/>
</dbReference>
<dbReference type="Gene3D" id="1.20.1440.120">
    <property type="entry name" value="Recombination protein O, C-terminal domain"/>
    <property type="match status" value="1"/>
</dbReference>
<dbReference type="HAMAP" id="MF_00201">
    <property type="entry name" value="RecO"/>
    <property type="match status" value="1"/>
</dbReference>
<dbReference type="InterPro" id="IPR037278">
    <property type="entry name" value="ARFGAP/RecO"/>
</dbReference>
<dbReference type="InterPro" id="IPR022572">
    <property type="entry name" value="DNA_rep/recomb_RecO_N"/>
</dbReference>
<dbReference type="InterPro" id="IPR012340">
    <property type="entry name" value="NA-bd_OB-fold"/>
</dbReference>
<dbReference type="InterPro" id="IPR003717">
    <property type="entry name" value="RecO"/>
</dbReference>
<dbReference type="InterPro" id="IPR042242">
    <property type="entry name" value="RecO_C"/>
</dbReference>
<dbReference type="NCBIfam" id="TIGR00613">
    <property type="entry name" value="reco"/>
    <property type="match status" value="1"/>
</dbReference>
<dbReference type="PANTHER" id="PTHR33991">
    <property type="entry name" value="DNA REPAIR PROTEIN RECO"/>
    <property type="match status" value="1"/>
</dbReference>
<dbReference type="PANTHER" id="PTHR33991:SF1">
    <property type="entry name" value="DNA REPAIR PROTEIN RECO"/>
    <property type="match status" value="1"/>
</dbReference>
<dbReference type="Pfam" id="PF02565">
    <property type="entry name" value="RecO_C"/>
    <property type="match status" value="1"/>
</dbReference>
<dbReference type="Pfam" id="PF11967">
    <property type="entry name" value="RecO_N"/>
    <property type="match status" value="1"/>
</dbReference>
<dbReference type="SUPFAM" id="SSF57863">
    <property type="entry name" value="ArfGap/RecO-like zinc finger"/>
    <property type="match status" value="1"/>
</dbReference>
<dbReference type="SUPFAM" id="SSF50249">
    <property type="entry name" value="Nucleic acid-binding proteins"/>
    <property type="match status" value="1"/>
</dbReference>
<organism>
    <name type="scientific">Pseudomonas aeruginosa (strain ATCC 15692 / DSM 22644 / CIP 104116 / JCM 14847 / LMG 12228 / 1C / PRS 101 / PAO1)</name>
    <dbReference type="NCBI Taxonomy" id="208964"/>
    <lineage>
        <taxon>Bacteria</taxon>
        <taxon>Pseudomonadati</taxon>
        <taxon>Pseudomonadota</taxon>
        <taxon>Gammaproteobacteria</taxon>
        <taxon>Pseudomonadales</taxon>
        <taxon>Pseudomonadaceae</taxon>
        <taxon>Pseudomonas</taxon>
    </lineage>
</organism>